<sequence>MSITLSDSAAARVNTFLANRGKGFGLRLGVRTSGCSGMAYVLEFVDEPTPEDIVFEDKGVKVVVDGKSLQFLDGTQLDFVKEGLNEGFKFTNPNVKDECGCGESFHV</sequence>
<name>ISCA_ECO81</name>
<organism>
    <name type="scientific">Escherichia coli O81 (strain ED1a)</name>
    <dbReference type="NCBI Taxonomy" id="585397"/>
    <lineage>
        <taxon>Bacteria</taxon>
        <taxon>Pseudomonadati</taxon>
        <taxon>Pseudomonadota</taxon>
        <taxon>Gammaproteobacteria</taxon>
        <taxon>Enterobacterales</taxon>
        <taxon>Enterobacteriaceae</taxon>
        <taxon>Escherichia</taxon>
    </lineage>
</organism>
<accession>B7MYG2</accession>
<evidence type="ECO:0000255" key="1">
    <source>
        <dbReference type="HAMAP-Rule" id="MF_01429"/>
    </source>
</evidence>
<gene>
    <name evidence="1" type="primary">iscA</name>
    <name type="ordered locus">ECED1_2959</name>
</gene>
<feature type="chain" id="PRO_1000184886" description="Iron-binding protein IscA">
    <location>
        <begin position="1"/>
        <end position="107"/>
    </location>
</feature>
<feature type="binding site" evidence="1">
    <location>
        <position position="35"/>
    </location>
    <ligand>
        <name>Fe cation</name>
        <dbReference type="ChEBI" id="CHEBI:24875"/>
    </ligand>
</feature>
<feature type="binding site" evidence="1">
    <location>
        <position position="99"/>
    </location>
    <ligand>
        <name>Fe cation</name>
        <dbReference type="ChEBI" id="CHEBI:24875"/>
    </ligand>
</feature>
<feature type="binding site" evidence="1">
    <location>
        <position position="101"/>
    </location>
    <ligand>
        <name>Fe cation</name>
        <dbReference type="ChEBI" id="CHEBI:24875"/>
    </ligand>
</feature>
<proteinExistence type="inferred from homology"/>
<protein>
    <recommendedName>
        <fullName evidence="1">Iron-binding protein IscA</fullName>
    </recommendedName>
    <alternativeName>
        <fullName evidence="1">Iron-sulfur cluster assembly protein</fullName>
    </alternativeName>
</protein>
<reference key="1">
    <citation type="journal article" date="2009" name="PLoS Genet.">
        <title>Organised genome dynamics in the Escherichia coli species results in highly diverse adaptive paths.</title>
        <authorList>
            <person name="Touchon M."/>
            <person name="Hoede C."/>
            <person name="Tenaillon O."/>
            <person name="Barbe V."/>
            <person name="Baeriswyl S."/>
            <person name="Bidet P."/>
            <person name="Bingen E."/>
            <person name="Bonacorsi S."/>
            <person name="Bouchier C."/>
            <person name="Bouvet O."/>
            <person name="Calteau A."/>
            <person name="Chiapello H."/>
            <person name="Clermont O."/>
            <person name="Cruveiller S."/>
            <person name="Danchin A."/>
            <person name="Diard M."/>
            <person name="Dossat C."/>
            <person name="Karoui M.E."/>
            <person name="Frapy E."/>
            <person name="Garry L."/>
            <person name="Ghigo J.M."/>
            <person name="Gilles A.M."/>
            <person name="Johnson J."/>
            <person name="Le Bouguenec C."/>
            <person name="Lescat M."/>
            <person name="Mangenot S."/>
            <person name="Martinez-Jehanne V."/>
            <person name="Matic I."/>
            <person name="Nassif X."/>
            <person name="Oztas S."/>
            <person name="Petit M.A."/>
            <person name="Pichon C."/>
            <person name="Rouy Z."/>
            <person name="Ruf C.S."/>
            <person name="Schneider D."/>
            <person name="Tourret J."/>
            <person name="Vacherie B."/>
            <person name="Vallenet D."/>
            <person name="Medigue C."/>
            <person name="Rocha E.P.C."/>
            <person name="Denamur E."/>
        </authorList>
    </citation>
    <scope>NUCLEOTIDE SEQUENCE [LARGE SCALE GENOMIC DNA]</scope>
    <source>
        <strain>ED1a</strain>
    </source>
</reference>
<comment type="function">
    <text evidence="1">Is able to transfer iron-sulfur clusters to apo-ferredoxin. Multiple cycles of [2Fe2S] cluster formation and transfer are observed, suggesting that IscA acts catalytically. Recruits intracellular free iron so as to provide iron for the assembly of transient iron-sulfur cluster in IscU in the presence of IscS, L-cysteine and the thioredoxin reductase system TrxA/TrxB.</text>
</comment>
<comment type="cofactor">
    <cofactor evidence="1">
        <name>Fe cation</name>
        <dbReference type="ChEBI" id="CHEBI:24875"/>
    </cofactor>
    <text evidence="1">Binds 2 iron ions per dimer. The dimer may bind additional iron ions.</text>
</comment>
<comment type="subunit">
    <text evidence="1">Homodimer; may form tetramers and higher multimers.</text>
</comment>
<comment type="similarity">
    <text evidence="1">Belongs to the HesB/IscA family.</text>
</comment>
<dbReference type="EMBL" id="CU928162">
    <property type="protein sequence ID" value="CAR09128.2"/>
    <property type="molecule type" value="Genomic_DNA"/>
</dbReference>
<dbReference type="RefSeq" id="WP_000028953.1">
    <property type="nucleotide sequence ID" value="NC_011745.1"/>
</dbReference>
<dbReference type="SMR" id="B7MYG2"/>
<dbReference type="GeneID" id="93774608"/>
<dbReference type="KEGG" id="ecq:ECED1_2959"/>
<dbReference type="HOGENOM" id="CLU_069054_5_1_6"/>
<dbReference type="Proteomes" id="UP000000748">
    <property type="component" value="Chromosome"/>
</dbReference>
<dbReference type="GO" id="GO:0005829">
    <property type="term" value="C:cytosol"/>
    <property type="evidence" value="ECO:0007669"/>
    <property type="project" value="TreeGrafter"/>
</dbReference>
<dbReference type="GO" id="GO:0051537">
    <property type="term" value="F:2 iron, 2 sulfur cluster binding"/>
    <property type="evidence" value="ECO:0007669"/>
    <property type="project" value="TreeGrafter"/>
</dbReference>
<dbReference type="GO" id="GO:0005506">
    <property type="term" value="F:iron ion binding"/>
    <property type="evidence" value="ECO:0007669"/>
    <property type="project" value="UniProtKB-UniRule"/>
</dbReference>
<dbReference type="GO" id="GO:0016226">
    <property type="term" value="P:iron-sulfur cluster assembly"/>
    <property type="evidence" value="ECO:0007669"/>
    <property type="project" value="UniProtKB-UniRule"/>
</dbReference>
<dbReference type="FunFam" id="2.60.300.12:FF:000001">
    <property type="entry name" value="Iron-binding protein IscA"/>
    <property type="match status" value="1"/>
</dbReference>
<dbReference type="Gene3D" id="2.60.300.12">
    <property type="entry name" value="HesB-like domain"/>
    <property type="match status" value="1"/>
</dbReference>
<dbReference type="HAMAP" id="MF_01429">
    <property type="entry name" value="Fe_S_insert_IscA"/>
    <property type="match status" value="1"/>
</dbReference>
<dbReference type="InterPro" id="IPR050322">
    <property type="entry name" value="Fe-S_cluster_asmbl/transfer"/>
</dbReference>
<dbReference type="InterPro" id="IPR000361">
    <property type="entry name" value="FeS_biogenesis"/>
</dbReference>
<dbReference type="InterPro" id="IPR016092">
    <property type="entry name" value="FeS_cluster_insertion"/>
</dbReference>
<dbReference type="InterPro" id="IPR017870">
    <property type="entry name" value="FeS_cluster_insertion_CS"/>
</dbReference>
<dbReference type="InterPro" id="IPR035903">
    <property type="entry name" value="HesB-like_dom_sf"/>
</dbReference>
<dbReference type="InterPro" id="IPR011302">
    <property type="entry name" value="IscA_proteobacteria"/>
</dbReference>
<dbReference type="NCBIfam" id="TIGR00049">
    <property type="entry name" value="iron-sulfur cluster assembly accessory protein"/>
    <property type="match status" value="1"/>
</dbReference>
<dbReference type="NCBIfam" id="TIGR02011">
    <property type="entry name" value="IscA"/>
    <property type="match status" value="1"/>
</dbReference>
<dbReference type="NCBIfam" id="NF007049">
    <property type="entry name" value="PRK09502.1"/>
    <property type="match status" value="1"/>
</dbReference>
<dbReference type="PANTHER" id="PTHR10072:SF41">
    <property type="entry name" value="IRON-SULFUR CLUSTER ASSEMBLY 1 HOMOLOG, MITOCHONDRIAL"/>
    <property type="match status" value="1"/>
</dbReference>
<dbReference type="PANTHER" id="PTHR10072">
    <property type="entry name" value="IRON-SULFUR CLUSTER ASSEMBLY PROTEIN"/>
    <property type="match status" value="1"/>
</dbReference>
<dbReference type="Pfam" id="PF01521">
    <property type="entry name" value="Fe-S_biosyn"/>
    <property type="match status" value="1"/>
</dbReference>
<dbReference type="SUPFAM" id="SSF89360">
    <property type="entry name" value="HesB-like domain"/>
    <property type="match status" value="1"/>
</dbReference>
<dbReference type="PROSITE" id="PS01152">
    <property type="entry name" value="HESB"/>
    <property type="match status" value="1"/>
</dbReference>
<keyword id="KW-0408">Iron</keyword>
<keyword id="KW-0479">Metal-binding</keyword>